<organism>
    <name type="scientific">Halobacterium salinarum (strain ATCC 29341 / DSM 671 / R1)</name>
    <dbReference type="NCBI Taxonomy" id="478009"/>
    <lineage>
        <taxon>Archaea</taxon>
        <taxon>Methanobacteriati</taxon>
        <taxon>Methanobacteriota</taxon>
        <taxon>Stenosarchaea group</taxon>
        <taxon>Halobacteria</taxon>
        <taxon>Halobacteriales</taxon>
        <taxon>Halobacteriaceae</taxon>
        <taxon>Halobacterium</taxon>
        <taxon>Halobacterium salinarum NRC-34001</taxon>
    </lineage>
</organism>
<evidence type="ECO:0000255" key="1">
    <source>
        <dbReference type="HAMAP-Rule" id="MF_00135"/>
    </source>
</evidence>
<feature type="chain" id="PRO_1000095924" description="N-(5'-phosphoribosyl)anthranilate isomerase">
    <location>
        <begin position="1"/>
        <end position="218"/>
    </location>
</feature>
<keyword id="KW-0028">Amino-acid biosynthesis</keyword>
<keyword id="KW-0057">Aromatic amino acid biosynthesis</keyword>
<keyword id="KW-0413">Isomerase</keyword>
<keyword id="KW-0822">Tryptophan biosynthesis</keyword>
<dbReference type="EC" id="5.3.1.24" evidence="1"/>
<dbReference type="EMBL" id="AM774415">
    <property type="protein sequence ID" value="CAP14190.1"/>
    <property type="molecule type" value="Genomic_DNA"/>
</dbReference>
<dbReference type="RefSeq" id="WP_010903201.1">
    <property type="nucleotide sequence ID" value="NC_010364.1"/>
</dbReference>
<dbReference type="SMR" id="B0R621"/>
<dbReference type="EnsemblBacteria" id="CAP14190">
    <property type="protein sequence ID" value="CAP14190"/>
    <property type="gene ID" value="OE_3333R"/>
</dbReference>
<dbReference type="KEGG" id="hsl:OE_3333R"/>
<dbReference type="HOGENOM" id="CLU_076364_2_1_2"/>
<dbReference type="PhylomeDB" id="B0R621"/>
<dbReference type="UniPathway" id="UPA00035">
    <property type="reaction ID" value="UER00042"/>
</dbReference>
<dbReference type="Proteomes" id="UP000001321">
    <property type="component" value="Chromosome"/>
</dbReference>
<dbReference type="GO" id="GO:0004640">
    <property type="term" value="F:phosphoribosylanthranilate isomerase activity"/>
    <property type="evidence" value="ECO:0007669"/>
    <property type="project" value="UniProtKB-UniRule"/>
</dbReference>
<dbReference type="GO" id="GO:0000162">
    <property type="term" value="P:L-tryptophan biosynthetic process"/>
    <property type="evidence" value="ECO:0007669"/>
    <property type="project" value="UniProtKB-UniRule"/>
</dbReference>
<dbReference type="CDD" id="cd00405">
    <property type="entry name" value="PRAI"/>
    <property type="match status" value="1"/>
</dbReference>
<dbReference type="Gene3D" id="3.20.20.70">
    <property type="entry name" value="Aldolase class I"/>
    <property type="match status" value="1"/>
</dbReference>
<dbReference type="HAMAP" id="MF_00135">
    <property type="entry name" value="PRAI"/>
    <property type="match status" value="1"/>
</dbReference>
<dbReference type="InterPro" id="IPR013785">
    <property type="entry name" value="Aldolase_TIM"/>
</dbReference>
<dbReference type="InterPro" id="IPR001240">
    <property type="entry name" value="PRAI_dom"/>
</dbReference>
<dbReference type="InterPro" id="IPR011060">
    <property type="entry name" value="RibuloseP-bd_barrel"/>
</dbReference>
<dbReference type="InterPro" id="IPR044643">
    <property type="entry name" value="TrpF_fam"/>
</dbReference>
<dbReference type="PANTHER" id="PTHR42894">
    <property type="entry name" value="N-(5'-PHOSPHORIBOSYL)ANTHRANILATE ISOMERASE"/>
    <property type="match status" value="1"/>
</dbReference>
<dbReference type="PANTHER" id="PTHR42894:SF1">
    <property type="entry name" value="N-(5'-PHOSPHORIBOSYL)ANTHRANILATE ISOMERASE"/>
    <property type="match status" value="1"/>
</dbReference>
<dbReference type="Pfam" id="PF00697">
    <property type="entry name" value="PRAI"/>
    <property type="match status" value="1"/>
</dbReference>
<dbReference type="SUPFAM" id="SSF51366">
    <property type="entry name" value="Ribulose-phoshate binding barrel"/>
    <property type="match status" value="1"/>
</dbReference>
<comment type="catalytic activity">
    <reaction evidence="1">
        <text>N-(5-phospho-beta-D-ribosyl)anthranilate = 1-(2-carboxyphenylamino)-1-deoxy-D-ribulose 5-phosphate</text>
        <dbReference type="Rhea" id="RHEA:21540"/>
        <dbReference type="ChEBI" id="CHEBI:18277"/>
        <dbReference type="ChEBI" id="CHEBI:58613"/>
        <dbReference type="EC" id="5.3.1.24"/>
    </reaction>
</comment>
<comment type="pathway">
    <text evidence="1">Amino-acid biosynthesis; L-tryptophan biosynthesis; L-tryptophan from chorismate: step 3/5.</text>
</comment>
<comment type="similarity">
    <text evidence="1">Belongs to the TrpF family.</text>
</comment>
<reference key="1">
    <citation type="journal article" date="2008" name="Genomics">
        <title>Evolution in the laboratory: the genome of Halobacterium salinarum strain R1 compared to that of strain NRC-1.</title>
        <authorList>
            <person name="Pfeiffer F."/>
            <person name="Schuster S.C."/>
            <person name="Broicher A."/>
            <person name="Falb M."/>
            <person name="Palm P."/>
            <person name="Rodewald K."/>
            <person name="Ruepp A."/>
            <person name="Soppa J."/>
            <person name="Tittor J."/>
            <person name="Oesterhelt D."/>
        </authorList>
    </citation>
    <scope>NUCLEOTIDE SEQUENCE [LARGE SCALE GENOMIC DNA]</scope>
    <source>
        <strain>ATCC 29341 / DSM 671 / R1</strain>
    </source>
</reference>
<protein>
    <recommendedName>
        <fullName evidence="1">N-(5'-phosphoribosyl)anthranilate isomerase</fullName>
        <shortName evidence="1">PRAI</shortName>
        <ecNumber evidence="1">5.3.1.24</ecNumber>
    </recommendedName>
</protein>
<sequence>MTRVKVCGLTTERDHAAAVAAGADAVGIIADVPVETPREVSVETATALRAATPPFVTSVLVTMPATPEHAVDLVRTVAPDAVQLHGDLPVGDAAYVAANTPCPVIKAVTAGDQSAARYADVVDALLVDSPPTDDAGAGGGTGRTHDWAATRAFADRVDTPVVLAGGLTPANVADAVDTVDPFAVDVASGVEARPGEKDHAAVSAFVARATATPDPTLT</sequence>
<proteinExistence type="inferred from homology"/>
<name>TRPF_HALS3</name>
<accession>B0R621</accession>
<gene>
    <name evidence="1" type="primary">trpF</name>
    <name type="ordered locus">OE_3333R</name>
</gene>